<keyword id="KW-1003">Cell membrane</keyword>
<keyword id="KW-0444">Lipid biosynthesis</keyword>
<keyword id="KW-0443">Lipid metabolism</keyword>
<keyword id="KW-0460">Magnesium</keyword>
<keyword id="KW-0472">Membrane</keyword>
<keyword id="KW-0594">Phospholipid biosynthesis</keyword>
<keyword id="KW-1208">Phospholipid metabolism</keyword>
<keyword id="KW-0808">Transferase</keyword>
<keyword id="KW-0812">Transmembrane</keyword>
<keyword id="KW-1133">Transmembrane helix</keyword>
<sequence>MDLFVFFALIWPPYVANGSAVLASRLKWRHPVDFGHNFVDGRRLFGDGKTYEGLAIGVVLGTVVGYLPNLLHPTLTLLDALILSVAALLGDLLGAFIKRRLCMPRGHPAFPLDQLDFILMAMLVRSLYADVPVEYIIAASVVTPIIHRATNIAAYILRLKKEPW</sequence>
<proteinExistence type="inferred from homology"/>
<comment type="function">
    <text evidence="1">Catalyzes the formation of CDP-2,3-bis-(O-geranylgeranyl)-sn-glycerol (CDP-archaeol) from 2,3-bis-(O-geranylgeranyl)-sn-glycerol 1-phosphate (DGGGP) and CTP. This reaction is the third ether-bond-formation step in the biosynthesis of archaeal membrane lipids.</text>
</comment>
<comment type="catalytic activity">
    <reaction evidence="1">
        <text>2,3-bis-O-(geranylgeranyl)-sn-glycerol 1-phosphate + CTP + H(+) = CDP-2,3-bis-O-(geranylgeranyl)-sn-glycerol + diphosphate</text>
        <dbReference type="Rhea" id="RHEA:25690"/>
        <dbReference type="ChEBI" id="CHEBI:15378"/>
        <dbReference type="ChEBI" id="CHEBI:33019"/>
        <dbReference type="ChEBI" id="CHEBI:37563"/>
        <dbReference type="ChEBI" id="CHEBI:58837"/>
        <dbReference type="ChEBI" id="CHEBI:58838"/>
        <dbReference type="EC" id="2.7.7.67"/>
    </reaction>
</comment>
<comment type="cofactor">
    <cofactor evidence="1">
        <name>Mg(2+)</name>
        <dbReference type="ChEBI" id="CHEBI:18420"/>
    </cofactor>
</comment>
<comment type="pathway">
    <text evidence="1">Membrane lipid metabolism; glycerophospholipid metabolism.</text>
</comment>
<comment type="subcellular location">
    <subcellularLocation>
        <location evidence="1">Cell membrane</location>
        <topology evidence="1">Multi-pass membrane protein</topology>
    </subcellularLocation>
</comment>
<comment type="similarity">
    <text evidence="1">Belongs to the CDP-archaeol synthase family.</text>
</comment>
<dbReference type="EC" id="2.7.7.67" evidence="1"/>
<dbReference type="EMBL" id="CP000660">
    <property type="protein sequence ID" value="ABP51860.1"/>
    <property type="molecule type" value="Genomic_DNA"/>
</dbReference>
<dbReference type="SMR" id="A4WN93"/>
<dbReference type="STRING" id="340102.Pars_2316"/>
<dbReference type="KEGG" id="pas:Pars_2316"/>
<dbReference type="HOGENOM" id="CLU_105710_0_0_2"/>
<dbReference type="OrthoDB" id="45383at2157"/>
<dbReference type="PhylomeDB" id="A4WN93"/>
<dbReference type="UniPathway" id="UPA00940"/>
<dbReference type="Proteomes" id="UP000001567">
    <property type="component" value="Chromosome"/>
</dbReference>
<dbReference type="GO" id="GO:0005886">
    <property type="term" value="C:plasma membrane"/>
    <property type="evidence" value="ECO:0007669"/>
    <property type="project" value="UniProtKB-SubCell"/>
</dbReference>
<dbReference type="GO" id="GO:0043338">
    <property type="term" value="F:CDP-2,3-bis-(O-geranylgeranyl)-sn-glycerol synthase activity"/>
    <property type="evidence" value="ECO:0007669"/>
    <property type="project" value="UniProtKB-EC"/>
</dbReference>
<dbReference type="GO" id="GO:0046474">
    <property type="term" value="P:glycerophospholipid biosynthetic process"/>
    <property type="evidence" value="ECO:0007669"/>
    <property type="project" value="UniProtKB-UniRule"/>
</dbReference>
<dbReference type="HAMAP" id="MF_01117">
    <property type="entry name" value="CDP_archaeol_synth"/>
    <property type="match status" value="1"/>
</dbReference>
<dbReference type="InterPro" id="IPR032690">
    <property type="entry name" value="CarS"/>
</dbReference>
<dbReference type="InterPro" id="IPR002726">
    <property type="entry name" value="CarS_archaea"/>
</dbReference>
<dbReference type="NCBIfam" id="NF003114">
    <property type="entry name" value="PRK04032.1"/>
    <property type="match status" value="1"/>
</dbReference>
<dbReference type="PANTHER" id="PTHR39650">
    <property type="entry name" value="CDP-ARCHAEOL SYNTHASE"/>
    <property type="match status" value="1"/>
</dbReference>
<dbReference type="PANTHER" id="PTHR39650:SF1">
    <property type="entry name" value="CDP-ARCHAEOL SYNTHASE"/>
    <property type="match status" value="1"/>
</dbReference>
<dbReference type="Pfam" id="PF01864">
    <property type="entry name" value="CarS-like"/>
    <property type="match status" value="1"/>
</dbReference>
<protein>
    <recommendedName>
        <fullName evidence="1">CDP-archaeol synthase</fullName>
        <ecNumber evidence="1">2.7.7.67</ecNumber>
    </recommendedName>
    <alternativeName>
        <fullName evidence="1">CDP-2,3-bis-(O-geranylgeranyl)-sn-glycerol synthase</fullName>
    </alternativeName>
</protein>
<reference key="1">
    <citation type="submission" date="2007-04" db="EMBL/GenBank/DDBJ databases">
        <title>Complete sequence of Pyrobaculum arsenaticum DSM 13514.</title>
        <authorList>
            <consortium name="US DOE Joint Genome Institute"/>
            <person name="Copeland A."/>
            <person name="Lucas S."/>
            <person name="Lapidus A."/>
            <person name="Barry K."/>
            <person name="Glavina del Rio T."/>
            <person name="Dalin E."/>
            <person name="Tice H."/>
            <person name="Pitluck S."/>
            <person name="Chain P."/>
            <person name="Malfatti S."/>
            <person name="Shin M."/>
            <person name="Vergez L."/>
            <person name="Schmutz J."/>
            <person name="Larimer F."/>
            <person name="Land M."/>
            <person name="Hauser L."/>
            <person name="Kyrpides N."/>
            <person name="Mikhailova N."/>
            <person name="Cozen A.E."/>
            <person name="Fitz-Gibbon S.T."/>
            <person name="House C.H."/>
            <person name="Saltikov C."/>
            <person name="Lowe T.M."/>
            <person name="Richardson P."/>
        </authorList>
    </citation>
    <scope>NUCLEOTIDE SEQUENCE [LARGE SCALE GENOMIC DNA]</scope>
    <source>
        <strain>ATCC 700994 / DSM 13514 / JCM 11321 / PZ6</strain>
    </source>
</reference>
<evidence type="ECO:0000255" key="1">
    <source>
        <dbReference type="HAMAP-Rule" id="MF_01117"/>
    </source>
</evidence>
<name>CDPAS_PYRAR</name>
<organism>
    <name type="scientific">Pyrobaculum arsenaticum (strain DSM 13514 / JCM 11321 / PZ6)</name>
    <dbReference type="NCBI Taxonomy" id="340102"/>
    <lineage>
        <taxon>Archaea</taxon>
        <taxon>Thermoproteota</taxon>
        <taxon>Thermoprotei</taxon>
        <taxon>Thermoproteales</taxon>
        <taxon>Thermoproteaceae</taxon>
        <taxon>Pyrobaculum</taxon>
    </lineage>
</organism>
<accession>A4WN93</accession>
<feature type="chain" id="PRO_0000298285" description="CDP-archaeol synthase">
    <location>
        <begin position="1"/>
        <end position="164"/>
    </location>
</feature>
<feature type="transmembrane region" description="Helical" evidence="1">
    <location>
        <begin position="3"/>
        <end position="23"/>
    </location>
</feature>
<feature type="transmembrane region" description="Helical" evidence="1">
    <location>
        <begin position="53"/>
        <end position="73"/>
    </location>
</feature>
<feature type="transmembrane region" description="Helical" evidence="1">
    <location>
        <begin position="77"/>
        <end position="97"/>
    </location>
</feature>
<feature type="transmembrane region" description="Helical" evidence="1">
    <location>
        <begin position="126"/>
        <end position="146"/>
    </location>
</feature>
<gene>
    <name evidence="1" type="primary">carS</name>
    <name type="ordered locus">Pars_2316</name>
</gene>